<dbReference type="EC" id="1.8.2.3"/>
<dbReference type="EMBL" id="AF031149">
    <property type="protein sequence ID" value="AAB86576.1"/>
    <property type="molecule type" value="Genomic_DNA"/>
</dbReference>
<dbReference type="EMBL" id="CP001896">
    <property type="protein sequence ID" value="ADC62031.1"/>
    <property type="molecule type" value="Genomic_DNA"/>
</dbReference>
<dbReference type="EMBL" id="L13419">
    <property type="protein sequence ID" value="AAA23317.1"/>
    <property type="molecule type" value="Genomic_DNA"/>
</dbReference>
<dbReference type="RefSeq" id="WP_012970307.1">
    <property type="nucleotide sequence ID" value="NC_013851.1"/>
</dbReference>
<dbReference type="PDB" id="1FCD">
    <property type="method" value="X-ray"/>
    <property type="resolution" value="2.53 A"/>
    <property type="chains" value="A/B=31-431"/>
</dbReference>
<dbReference type="PDBsum" id="1FCD"/>
<dbReference type="SMR" id="Q06530"/>
<dbReference type="DIP" id="DIP-6169N"/>
<dbReference type="STRING" id="572477.Alvin_1092"/>
<dbReference type="KEGG" id="alv:Alvin_1092"/>
<dbReference type="eggNOG" id="COG0446">
    <property type="taxonomic scope" value="Bacteria"/>
</dbReference>
<dbReference type="HOGENOM" id="CLU_030742_0_0_6"/>
<dbReference type="OrthoDB" id="9802771at2"/>
<dbReference type="BioCyc" id="MetaCyc:MONOMER-12317"/>
<dbReference type="EvolutionaryTrace" id="Q06530"/>
<dbReference type="Proteomes" id="UP000001441">
    <property type="component" value="Chromosome"/>
</dbReference>
<dbReference type="GO" id="GO:0042597">
    <property type="term" value="C:periplasmic space"/>
    <property type="evidence" value="ECO:0007669"/>
    <property type="project" value="UniProtKB-SubCell"/>
</dbReference>
<dbReference type="GO" id="GO:0050660">
    <property type="term" value="F:flavin adenine dinucleotide binding"/>
    <property type="evidence" value="ECO:0007669"/>
    <property type="project" value="InterPro"/>
</dbReference>
<dbReference type="GO" id="GO:0070225">
    <property type="term" value="F:sulfide dehydrogenase activity"/>
    <property type="evidence" value="ECO:0007669"/>
    <property type="project" value="UniProtKB-EC"/>
</dbReference>
<dbReference type="Gene3D" id="3.50.50.60">
    <property type="entry name" value="FAD/NAD(P)-binding domain"/>
    <property type="match status" value="2"/>
</dbReference>
<dbReference type="Gene3D" id="3.90.760.10">
    <property type="entry name" value="Flavocytochrome c sulphide dehydrogenase, flavin-binding domain"/>
    <property type="match status" value="1"/>
</dbReference>
<dbReference type="InterPro" id="IPR036188">
    <property type="entry name" value="FAD/NAD-bd_sf"/>
</dbReference>
<dbReference type="InterPro" id="IPR023753">
    <property type="entry name" value="FAD/NAD-binding_dom"/>
</dbReference>
<dbReference type="InterPro" id="IPR016156">
    <property type="entry name" value="FAD/NAD-linked_Rdtase_dimer_sf"/>
</dbReference>
<dbReference type="InterPro" id="IPR049386">
    <property type="entry name" value="FCSD_central"/>
</dbReference>
<dbReference type="InterPro" id="IPR015323">
    <property type="entry name" value="FlavoCytC_S_DH_flav-bd"/>
</dbReference>
<dbReference type="InterPro" id="IPR037092">
    <property type="entry name" value="FlavoCytC_S_DH_flav-bd_sf"/>
</dbReference>
<dbReference type="InterPro" id="IPR052541">
    <property type="entry name" value="SQRD"/>
</dbReference>
<dbReference type="InterPro" id="IPR006311">
    <property type="entry name" value="TAT_signal"/>
</dbReference>
<dbReference type="InterPro" id="IPR019546">
    <property type="entry name" value="TAT_signal_bac_arc"/>
</dbReference>
<dbReference type="NCBIfam" id="TIGR01409">
    <property type="entry name" value="TAT_signal_seq"/>
    <property type="match status" value="1"/>
</dbReference>
<dbReference type="PANTHER" id="PTHR43755">
    <property type="match status" value="1"/>
</dbReference>
<dbReference type="PANTHER" id="PTHR43755:SF1">
    <property type="entry name" value="FAD-DEPENDENT PYRIDINE NUCLEOTIDE-DISULPHIDE OXIDOREDUCTASE"/>
    <property type="match status" value="1"/>
</dbReference>
<dbReference type="Pfam" id="PF09242">
    <property type="entry name" value="FCSD-flav_bind"/>
    <property type="match status" value="1"/>
</dbReference>
<dbReference type="Pfam" id="PF21706">
    <property type="entry name" value="FCSD_central"/>
    <property type="match status" value="1"/>
</dbReference>
<dbReference type="Pfam" id="PF07992">
    <property type="entry name" value="Pyr_redox_2"/>
    <property type="match status" value="1"/>
</dbReference>
<dbReference type="Pfam" id="PF10518">
    <property type="entry name" value="TAT_signal"/>
    <property type="match status" value="1"/>
</dbReference>
<dbReference type="SUPFAM" id="SSF51905">
    <property type="entry name" value="FAD/NAD(P)-binding domain"/>
    <property type="match status" value="2"/>
</dbReference>
<dbReference type="SUPFAM" id="SSF55424">
    <property type="entry name" value="FAD/NAD-linked reductases, dimerisation (C-terminal) domain"/>
    <property type="match status" value="1"/>
</dbReference>
<dbReference type="PROSITE" id="PS51318">
    <property type="entry name" value="TAT"/>
    <property type="match status" value="1"/>
</dbReference>
<reference key="1">
    <citation type="submission" date="1997-10" db="EMBL/GenBank/DDBJ databases">
        <authorList>
            <person name="Reinartz M."/>
            <person name="Trueper H.G."/>
            <person name="Dahl C."/>
        </authorList>
    </citation>
    <scope>NUCLEOTIDE SEQUENCE [GENOMIC DNA]</scope>
</reference>
<reference key="2">
    <citation type="journal article" date="2011" name="Stand. Genomic Sci.">
        <title>Complete genome sequence of Allochromatium vinosum DSM 180(T).</title>
        <authorList>
            <person name="Weissgerber T."/>
            <person name="Zigann R."/>
            <person name="Bruce D."/>
            <person name="Chang Y.J."/>
            <person name="Detter J.C."/>
            <person name="Han C."/>
            <person name="Hauser L."/>
            <person name="Jeffries C.D."/>
            <person name="Land M."/>
            <person name="Munk A.C."/>
            <person name="Tapia R."/>
            <person name="Dahl C."/>
        </authorList>
    </citation>
    <scope>NUCLEOTIDE SEQUENCE [LARGE SCALE GENOMIC DNA]</scope>
    <source>
        <strain>ATCC 17899 / DSM 180 / NBRC 103801 / NCIMB 10441 / D</strain>
    </source>
</reference>
<reference key="3">
    <citation type="journal article" date="1993" name="J. Biol. Chem.">
        <title>Nucleotide sequence of the heme subunit of flavocytochrome c from the purple phototrophic bacterium, Chromatium vinosum. A 2.6-kilobase pair DNA fragment contains two multiheme cytochromes, a flavoprotein, and a homolog of human ankyrin.</title>
        <authorList>
            <person name="Dolata M.M."/>
            <person name="van Beeumen J.J."/>
            <person name="Ambler R.P."/>
            <person name="Meyer T.E."/>
            <person name="Cusanovich M.A."/>
        </authorList>
    </citation>
    <scope>NUCLEOTIDE SEQUENCE [GENOMIC DNA] OF 1-125</scope>
    <scope>PROTEIN SEQUENCE OF 31-86; 90-114 AND 119-125</scope>
</reference>
<reference key="4">
    <citation type="journal article" date="1991" name="J. Biol. Chem.">
        <title>Covalent structure of the diheme cytochrome subunit and amino-terminal sequence of the flavoprotein subunit of flavocytochrome c from Chromatium vinosum.</title>
        <authorList>
            <person name="van Beeumen J.J."/>
            <person name="Demol H."/>
            <person name="Samyn B."/>
            <person name="Bartsch R.G."/>
            <person name="Meyer T.E."/>
            <person name="Dolata M.M."/>
            <person name="Cusanovich M.A."/>
        </authorList>
    </citation>
    <scope>PROTEIN SEQUENCE OF 31-78</scope>
</reference>
<reference key="5">
    <citation type="journal article" date="1979" name="J. Biochem.">
        <title>Flavocytochrome c of Chromatium vinosum. Some enzymatic properties and subunit structure.</title>
        <authorList>
            <person name="Fukumori Y."/>
            <person name="Yamanaka T."/>
        </authorList>
    </citation>
    <scope>CATALYTIC ACTIVITY</scope>
</reference>
<reference key="6">
    <citation type="journal article" date="1994" name="Science">
        <title>The structure of flavocytochrome c sulfide dehydrogenase from a purple phototrophic bacterium.</title>
        <authorList>
            <person name="Chen Z.-W."/>
            <person name="Koh M."/>
            <person name="van Driessche G."/>
            <person name="van Beeumen J.J."/>
            <person name="Bartsch R.G."/>
            <person name="Meyer T.E."/>
            <person name="Cusanovich M.A."/>
            <person name="Mathews F.S."/>
        </authorList>
    </citation>
    <scope>X-RAY CRYSTALLOGRAPHY (2.5 ANGSTROMS)</scope>
</reference>
<comment type="catalytic activity">
    <reaction evidence="4">
        <text>hydrogen sulfide + 2 Fe(III)-[cytochrome c] = sulfur + 2 Fe(II)-[cytochrome c] + H(+)</text>
        <dbReference type="Rhea" id="RHEA:30223"/>
        <dbReference type="Rhea" id="RHEA-COMP:10350"/>
        <dbReference type="Rhea" id="RHEA-COMP:14399"/>
        <dbReference type="ChEBI" id="CHEBI:15378"/>
        <dbReference type="ChEBI" id="CHEBI:26833"/>
        <dbReference type="ChEBI" id="CHEBI:29033"/>
        <dbReference type="ChEBI" id="CHEBI:29034"/>
        <dbReference type="ChEBI" id="CHEBI:29919"/>
        <dbReference type="EC" id="1.8.2.3"/>
    </reaction>
</comment>
<comment type="subunit">
    <text>Dimer of one cytochrome and one flavoprotein.</text>
</comment>
<comment type="subcellular location">
    <subcellularLocation>
        <location>Periplasm</location>
    </subcellularLocation>
</comment>
<comment type="PTM">
    <text>Predicted to be exported by the Tat system. The position of the signal peptide cleavage has been experimentally proven.</text>
</comment>
<comment type="miscellaneous">
    <text>The active site is a redox-active disulfide bond.</text>
</comment>
<sequence length="431" mass="45898">MTLNRRDFIKTSGAAVAAVGILGFPHLAFGAGRKVVVVGGGTGGATAAKYIKLADPSIEVTLIEPNTDYYTCYLSNEVIGGDRKLESIKHGYDGLRAHGIQVVHDSATGIDPDKKLVKTAGGAEFGYDRCVVAPGIELIYDKIEGYSEEAAAKLPHAWKAGEQTAILRKQLEDMADGGTVVIAPPAAPFRCPPGPYERASQVAYYLKAHKPKSKVIILDSSQTFSKQSQFSKGWERLYGFGTENAMIEWHPGPDSAVVKVDGGEMMVETAFGDEFKADVINLIPPQRAGKIAQIAGLTNDAGWCPVDIKTFESSIHKGIHVIGDACIANPMPKSGYSANSQGKVAAAAVVALLKGEEPGTPSYLNTCYSILAPAYGISVAAIYRPNADGSAIESVPDSGGVTPVDAPDWVLEREVQYAYSWYNNIVHDTFG</sequence>
<evidence type="ECO:0000255" key="1"/>
<evidence type="ECO:0000255" key="2">
    <source>
        <dbReference type="PROSITE-ProRule" id="PRU00648"/>
    </source>
</evidence>
<evidence type="ECO:0000269" key="3">
    <source>
    </source>
</evidence>
<evidence type="ECO:0000269" key="4">
    <source>
    </source>
</evidence>
<evidence type="ECO:0000269" key="5">
    <source>
    </source>
</evidence>
<evidence type="ECO:0000305" key="6"/>
<evidence type="ECO:0007829" key="7">
    <source>
        <dbReference type="PDB" id="1FCD"/>
    </source>
</evidence>
<organism>
    <name type="scientific">Allochromatium vinosum (strain ATCC 17899 / DSM 180 / NBRC 103801 / NCIMB 10441 / D)</name>
    <name type="common">Chromatium vinosum</name>
    <dbReference type="NCBI Taxonomy" id="572477"/>
    <lineage>
        <taxon>Bacteria</taxon>
        <taxon>Pseudomonadati</taxon>
        <taxon>Pseudomonadota</taxon>
        <taxon>Gammaproteobacteria</taxon>
        <taxon>Chromatiales</taxon>
        <taxon>Chromatiaceae</taxon>
        <taxon>Allochromatium</taxon>
    </lineage>
</organism>
<feature type="signal peptide" description="Tat-type signal" evidence="2 3 5">
    <location>
        <begin position="1"/>
        <end position="30"/>
    </location>
</feature>
<feature type="chain" id="PRO_0000021105" description="Sulfide dehydrogenase [flavocytochrome c] flavoprotein chain">
    <location>
        <begin position="31"/>
        <end position="431"/>
    </location>
</feature>
<feature type="binding site" evidence="1">
    <location>
        <begin position="70"/>
        <end position="76"/>
    </location>
    <ligand>
        <name>FAD</name>
        <dbReference type="ChEBI" id="CHEBI:57692"/>
    </ligand>
</feature>
<feature type="disulfide bond" description="Redox-active">
    <location>
        <begin position="191"/>
        <end position="367"/>
    </location>
</feature>
<feature type="sequence conflict" description="In Ref. 4; AA sequence." evidence="6" ref="4">
    <original>D</original>
    <variation>K</variation>
    <location>
        <position position="68"/>
    </location>
</feature>
<feature type="strand" evidence="7">
    <location>
        <begin position="34"/>
        <end position="38"/>
    </location>
</feature>
<feature type="helix" evidence="7">
    <location>
        <begin position="42"/>
        <end position="54"/>
    </location>
</feature>
<feature type="strand" evidence="7">
    <location>
        <begin position="58"/>
        <end position="63"/>
    </location>
</feature>
<feature type="helix" evidence="7">
    <location>
        <begin position="75"/>
        <end position="79"/>
    </location>
</feature>
<feature type="helix" evidence="7">
    <location>
        <begin position="85"/>
        <end position="88"/>
    </location>
</feature>
<feature type="helix" evidence="7">
    <location>
        <begin position="93"/>
        <end position="96"/>
    </location>
</feature>
<feature type="turn" evidence="7">
    <location>
        <begin position="97"/>
        <end position="99"/>
    </location>
</feature>
<feature type="strand" evidence="7">
    <location>
        <begin position="100"/>
        <end position="103"/>
    </location>
</feature>
<feature type="strand" evidence="7">
    <location>
        <begin position="107"/>
        <end position="109"/>
    </location>
</feature>
<feature type="turn" evidence="7">
    <location>
        <begin position="112"/>
        <end position="115"/>
    </location>
</feature>
<feature type="strand" evidence="7">
    <location>
        <begin position="116"/>
        <end position="119"/>
    </location>
</feature>
<feature type="strand" evidence="7">
    <location>
        <begin position="124"/>
        <end position="126"/>
    </location>
</feature>
<feature type="strand" evidence="7">
    <location>
        <begin position="128"/>
        <end position="132"/>
    </location>
</feature>
<feature type="strand" evidence="7">
    <location>
        <begin position="136"/>
        <end position="138"/>
    </location>
</feature>
<feature type="turn" evidence="7">
    <location>
        <begin position="148"/>
        <end position="153"/>
    </location>
</feature>
<feature type="helix" evidence="7">
    <location>
        <begin position="162"/>
        <end position="173"/>
    </location>
</feature>
<feature type="strand" evidence="7">
    <location>
        <begin position="180"/>
        <end position="183"/>
    </location>
</feature>
<feature type="helix" evidence="7">
    <location>
        <begin position="194"/>
        <end position="206"/>
    </location>
</feature>
<feature type="helix" evidence="7">
    <location>
        <begin position="207"/>
        <end position="209"/>
    </location>
</feature>
<feature type="strand" evidence="7">
    <location>
        <begin position="215"/>
        <end position="218"/>
    </location>
</feature>
<feature type="helix" evidence="7">
    <location>
        <begin position="227"/>
        <end position="238"/>
    </location>
</feature>
<feature type="strand" evidence="7">
    <location>
        <begin position="246"/>
        <end position="250"/>
    </location>
</feature>
<feature type="strand" evidence="7">
    <location>
        <begin position="257"/>
        <end position="262"/>
    </location>
</feature>
<feature type="turn" evidence="7">
    <location>
        <begin position="263"/>
        <end position="265"/>
    </location>
</feature>
<feature type="strand" evidence="7">
    <location>
        <begin position="266"/>
        <end position="269"/>
    </location>
</feature>
<feature type="strand" evidence="7">
    <location>
        <begin position="274"/>
        <end position="276"/>
    </location>
</feature>
<feature type="strand" evidence="7">
    <location>
        <begin position="278"/>
        <end position="282"/>
    </location>
</feature>
<feature type="strand" evidence="7">
    <location>
        <begin position="286"/>
        <end position="288"/>
    </location>
</feature>
<feature type="helix" evidence="7">
    <location>
        <begin position="290"/>
        <end position="294"/>
    </location>
</feature>
<feature type="strand" evidence="7">
    <location>
        <begin position="302"/>
        <end position="306"/>
    </location>
</feature>
<feature type="strand" evidence="7">
    <location>
        <begin position="308"/>
        <end position="310"/>
    </location>
</feature>
<feature type="strand" evidence="7">
    <location>
        <begin position="312"/>
        <end position="316"/>
    </location>
</feature>
<feature type="strand" evidence="7">
    <location>
        <begin position="319"/>
        <end position="321"/>
    </location>
</feature>
<feature type="strand" evidence="7">
    <location>
        <begin position="325"/>
        <end position="327"/>
    </location>
</feature>
<feature type="helix" evidence="7">
    <location>
        <begin position="335"/>
        <end position="354"/>
    </location>
</feature>
<feature type="strand" evidence="7">
    <location>
        <begin position="363"/>
        <end position="372"/>
    </location>
</feature>
<feature type="strand" evidence="7">
    <location>
        <begin position="375"/>
        <end position="385"/>
    </location>
</feature>
<feature type="strand" evidence="7">
    <location>
        <begin position="387"/>
        <end position="390"/>
    </location>
</feature>
<feature type="strand" evidence="7">
    <location>
        <begin position="392"/>
        <end position="394"/>
    </location>
</feature>
<feature type="helix" evidence="7">
    <location>
        <begin position="408"/>
        <end position="428"/>
    </location>
</feature>
<name>DHSU_ALLVD</name>
<keyword id="KW-0002">3D-structure</keyword>
<keyword id="KW-0903">Direct protein sequencing</keyword>
<keyword id="KW-1015">Disulfide bond</keyword>
<keyword id="KW-0274">FAD</keyword>
<keyword id="KW-0285">Flavoprotein</keyword>
<keyword id="KW-0560">Oxidoreductase</keyword>
<keyword id="KW-0574">Periplasm</keyword>
<keyword id="KW-0676">Redox-active center</keyword>
<keyword id="KW-1185">Reference proteome</keyword>
<keyword id="KW-0732">Signal</keyword>
<proteinExistence type="evidence at protein level"/>
<protein>
    <recommendedName>
        <fullName>Sulfide dehydrogenase [flavocytochrome c] flavoprotein chain</fullName>
        <ecNumber>1.8.2.3</ecNumber>
    </recommendedName>
    <alternativeName>
        <fullName>FCSD</fullName>
    </alternativeName>
    <alternativeName>
        <fullName>Flavocytochrome c flavoprotein subunit</fullName>
        <shortName>FC</shortName>
    </alternativeName>
</protein>
<gene>
    <name type="primary">fccB</name>
    <name type="ordered locus">Alvin_1092</name>
</gene>
<accession>Q06530</accession>
<accession>D3RRX7</accession>
<accession>O31157</accession>